<keyword id="KW-0002">3D-structure</keyword>
<keyword id="KW-0007">Acetylation</keyword>
<keyword id="KW-0067">ATP-binding</keyword>
<keyword id="KW-0903">Direct protein sequencing</keyword>
<keyword id="KW-0418">Kinase</keyword>
<keyword id="KW-0496">Mitochondrion</keyword>
<keyword id="KW-0547">Nucleotide-binding</keyword>
<keyword id="KW-0597">Phosphoprotein</keyword>
<keyword id="KW-1185">Reference proteome</keyword>
<keyword id="KW-0808">Transferase</keyword>
<keyword id="KW-0809">Transit peptide</keyword>
<dbReference type="EC" id="2.7.11.1" evidence="9"/>
<dbReference type="EC" id="2.7.11.4" evidence="4 6"/>
<dbReference type="EMBL" id="M93271">
    <property type="protein sequence ID" value="AAA40818.1"/>
    <property type="molecule type" value="mRNA"/>
</dbReference>
<dbReference type="EMBL" id="U27456">
    <property type="protein sequence ID" value="AAB60498.1"/>
    <property type="molecule type" value="mRNA"/>
</dbReference>
<dbReference type="PIR" id="A42924">
    <property type="entry name" value="A42924"/>
</dbReference>
<dbReference type="RefSeq" id="NP_062117.2">
    <property type="nucleotide sequence ID" value="NM_019244.2"/>
</dbReference>
<dbReference type="RefSeq" id="XP_063143730.1">
    <property type="nucleotide sequence ID" value="XM_063287660.1"/>
</dbReference>
<dbReference type="PDB" id="1GJV">
    <property type="method" value="X-ray"/>
    <property type="resolution" value="2.70 A"/>
    <property type="chains" value="A=31-412"/>
</dbReference>
<dbReference type="PDB" id="1GKX">
    <property type="method" value="X-ray"/>
    <property type="resolution" value="2.30 A"/>
    <property type="chains" value="A=31-412"/>
</dbReference>
<dbReference type="PDB" id="1GKZ">
    <property type="method" value="X-ray"/>
    <property type="resolution" value="2.20 A"/>
    <property type="chains" value="A=31-412"/>
</dbReference>
<dbReference type="PDB" id="3TZ0">
    <property type="method" value="X-ray"/>
    <property type="resolution" value="2.50 A"/>
    <property type="chains" value="A=1-412"/>
</dbReference>
<dbReference type="PDB" id="3TZ2">
    <property type="method" value="X-ray"/>
    <property type="resolution" value="2.85 A"/>
    <property type="chains" value="A=1-412"/>
</dbReference>
<dbReference type="PDB" id="3TZ4">
    <property type="method" value="X-ray"/>
    <property type="resolution" value="2.25 A"/>
    <property type="chains" value="A=1-412"/>
</dbReference>
<dbReference type="PDB" id="3TZ5">
    <property type="method" value="X-ray"/>
    <property type="resolution" value="2.40 A"/>
    <property type="chains" value="A=1-412"/>
</dbReference>
<dbReference type="PDB" id="3VAD">
    <property type="method" value="X-ray"/>
    <property type="resolution" value="2.60 A"/>
    <property type="chains" value="A=1-412"/>
</dbReference>
<dbReference type="PDB" id="4DZY">
    <property type="method" value="X-ray"/>
    <property type="resolution" value="2.10 A"/>
    <property type="chains" value="A=1-412"/>
</dbReference>
<dbReference type="PDB" id="4E00">
    <property type="method" value="X-ray"/>
    <property type="resolution" value="2.15 A"/>
    <property type="chains" value="A=1-412"/>
</dbReference>
<dbReference type="PDB" id="4E01">
    <property type="method" value="X-ray"/>
    <property type="resolution" value="1.97 A"/>
    <property type="chains" value="A=1-412"/>
</dbReference>
<dbReference type="PDB" id="4E02">
    <property type="method" value="X-ray"/>
    <property type="resolution" value="2.15 A"/>
    <property type="chains" value="A=1-412"/>
</dbReference>
<dbReference type="PDB" id="4H7Q">
    <property type="method" value="X-ray"/>
    <property type="resolution" value="2.10 A"/>
    <property type="chains" value="A=1-412"/>
</dbReference>
<dbReference type="PDB" id="4H81">
    <property type="method" value="X-ray"/>
    <property type="resolution" value="2.05 A"/>
    <property type="chains" value="A=1-412"/>
</dbReference>
<dbReference type="PDB" id="4H85">
    <property type="method" value="X-ray"/>
    <property type="resolution" value="2.10 A"/>
    <property type="chains" value="A=1-412"/>
</dbReference>
<dbReference type="PDB" id="8EGD">
    <property type="method" value="X-ray"/>
    <property type="resolution" value="2.05 A"/>
    <property type="chains" value="A=31-412"/>
</dbReference>
<dbReference type="PDB" id="8EGF">
    <property type="method" value="X-ray"/>
    <property type="resolution" value="1.85 A"/>
    <property type="chains" value="A=31-412"/>
</dbReference>
<dbReference type="PDB" id="8EGQ">
    <property type="method" value="X-ray"/>
    <property type="resolution" value="1.96 A"/>
    <property type="chains" value="A=31-412"/>
</dbReference>
<dbReference type="PDB" id="8EGU">
    <property type="method" value="X-ray"/>
    <property type="resolution" value="1.92 A"/>
    <property type="chains" value="A=31-412"/>
</dbReference>
<dbReference type="PDB" id="8F4Q">
    <property type="method" value="X-ray"/>
    <property type="resolution" value="2.15 A"/>
    <property type="chains" value="A=31-412"/>
</dbReference>
<dbReference type="PDBsum" id="1GJV"/>
<dbReference type="PDBsum" id="1GKX"/>
<dbReference type="PDBsum" id="1GKZ"/>
<dbReference type="PDBsum" id="3TZ0"/>
<dbReference type="PDBsum" id="3TZ2"/>
<dbReference type="PDBsum" id="3TZ4"/>
<dbReference type="PDBsum" id="3TZ5"/>
<dbReference type="PDBsum" id="3VAD"/>
<dbReference type="PDBsum" id="4DZY"/>
<dbReference type="PDBsum" id="4E00"/>
<dbReference type="PDBsum" id="4E01"/>
<dbReference type="PDBsum" id="4E02"/>
<dbReference type="PDBsum" id="4H7Q"/>
<dbReference type="PDBsum" id="4H81"/>
<dbReference type="PDBsum" id="4H85"/>
<dbReference type="PDBsum" id="8EGD"/>
<dbReference type="PDBsum" id="8EGF"/>
<dbReference type="PDBsum" id="8EGQ"/>
<dbReference type="PDBsum" id="8EGU"/>
<dbReference type="PDBsum" id="8F4Q"/>
<dbReference type="SMR" id="Q00972"/>
<dbReference type="BioGRID" id="248235">
    <property type="interactions" value="1"/>
</dbReference>
<dbReference type="FunCoup" id="Q00972">
    <property type="interactions" value="779"/>
</dbReference>
<dbReference type="IntAct" id="Q00972">
    <property type="interactions" value="4"/>
</dbReference>
<dbReference type="STRING" id="10116.ENSRNOP00000069014"/>
<dbReference type="iPTMnet" id="Q00972"/>
<dbReference type="PhosphoSitePlus" id="Q00972"/>
<dbReference type="PaxDb" id="10116-ENSRNOP00000026466"/>
<dbReference type="Ensembl" id="ENSRNOT00000078578.2">
    <property type="protein sequence ID" value="ENSRNOP00000069014.1"/>
    <property type="gene ID" value="ENSRNOG00000019485.7"/>
</dbReference>
<dbReference type="GeneID" id="29603"/>
<dbReference type="KEGG" id="rno:29603"/>
<dbReference type="UCSC" id="RGD:2198">
    <property type="organism name" value="rat"/>
</dbReference>
<dbReference type="AGR" id="RGD:2198"/>
<dbReference type="CTD" id="10295"/>
<dbReference type="RGD" id="2198">
    <property type="gene designation" value="Bckdk"/>
</dbReference>
<dbReference type="eggNOG" id="KOG0787">
    <property type="taxonomic scope" value="Eukaryota"/>
</dbReference>
<dbReference type="GeneTree" id="ENSGT00940000159512"/>
<dbReference type="InParanoid" id="Q00972"/>
<dbReference type="OMA" id="WSYPPSA"/>
<dbReference type="OrthoDB" id="31443at9989"/>
<dbReference type="PhylomeDB" id="Q00972"/>
<dbReference type="TreeFam" id="TF331303"/>
<dbReference type="BRENDA" id="2.7.11.4">
    <property type="organism ID" value="5301"/>
</dbReference>
<dbReference type="Reactome" id="R-RNO-70895">
    <property type="pathway name" value="Branched-chain amino acid catabolism"/>
</dbReference>
<dbReference type="SABIO-RK" id="Q00972"/>
<dbReference type="EvolutionaryTrace" id="Q00972"/>
<dbReference type="PRO" id="PR:Q00972"/>
<dbReference type="Proteomes" id="UP000002494">
    <property type="component" value="Chromosome 1"/>
</dbReference>
<dbReference type="Bgee" id="ENSRNOG00000019485">
    <property type="expression patterns" value="Expressed in pancreas and 19 other cell types or tissues"/>
</dbReference>
<dbReference type="ExpressionAtlas" id="Q00972">
    <property type="expression patterns" value="baseline and differential"/>
</dbReference>
<dbReference type="GO" id="GO:0005759">
    <property type="term" value="C:mitochondrial matrix"/>
    <property type="evidence" value="ECO:0007669"/>
    <property type="project" value="UniProtKB-SubCell"/>
</dbReference>
<dbReference type="GO" id="GO:0005739">
    <property type="term" value="C:mitochondrion"/>
    <property type="evidence" value="ECO:0000318"/>
    <property type="project" value="GO_Central"/>
</dbReference>
<dbReference type="GO" id="GO:0045252">
    <property type="term" value="C:oxoglutarate dehydrogenase complex"/>
    <property type="evidence" value="ECO:0000314"/>
    <property type="project" value="HGNC-UCL"/>
</dbReference>
<dbReference type="GO" id="GO:0047323">
    <property type="term" value="F:[3-methyl-2-oxobutanoate dehydrogenase (acetyl-transferring)] kinase activity"/>
    <property type="evidence" value="ECO:0000315"/>
    <property type="project" value="RGD"/>
</dbReference>
<dbReference type="GO" id="GO:0005524">
    <property type="term" value="F:ATP binding"/>
    <property type="evidence" value="ECO:0000314"/>
    <property type="project" value="HGNC-UCL"/>
</dbReference>
<dbReference type="GO" id="GO:0004672">
    <property type="term" value="F:protein kinase activity"/>
    <property type="evidence" value="ECO:0000266"/>
    <property type="project" value="RGD"/>
</dbReference>
<dbReference type="GO" id="GO:0106310">
    <property type="term" value="F:protein serine kinase activity"/>
    <property type="evidence" value="ECO:0007669"/>
    <property type="project" value="RHEA"/>
</dbReference>
<dbReference type="GO" id="GO:0004674">
    <property type="term" value="F:protein serine/threonine kinase activity"/>
    <property type="evidence" value="ECO:0000314"/>
    <property type="project" value="HGNC-UCL"/>
</dbReference>
<dbReference type="GO" id="GO:0004722">
    <property type="term" value="F:protein serine/threonine phosphatase activity"/>
    <property type="evidence" value="ECO:0000266"/>
    <property type="project" value="RGD"/>
</dbReference>
<dbReference type="GO" id="GO:0004740">
    <property type="term" value="F:pyruvate dehydrogenase (acetyl-transferring) kinase activity"/>
    <property type="evidence" value="ECO:0000318"/>
    <property type="project" value="GO_Central"/>
</dbReference>
<dbReference type="GO" id="GO:0009083">
    <property type="term" value="P:branched-chain amino acid catabolic process"/>
    <property type="evidence" value="ECO:0000314"/>
    <property type="project" value="HGNC-UCL"/>
</dbReference>
<dbReference type="GO" id="GO:0006550">
    <property type="term" value="P:isoleucine catabolic process"/>
    <property type="evidence" value="ECO:0000315"/>
    <property type="project" value="RGD"/>
</dbReference>
<dbReference type="GO" id="GO:0006552">
    <property type="term" value="P:L-leucine catabolic process"/>
    <property type="evidence" value="ECO:0000315"/>
    <property type="project" value="RGD"/>
</dbReference>
<dbReference type="GO" id="GO:0008610">
    <property type="term" value="P:lipid biosynthetic process"/>
    <property type="evidence" value="ECO:0000266"/>
    <property type="project" value="RGD"/>
</dbReference>
<dbReference type="GO" id="GO:0010510">
    <property type="term" value="P:regulation of acetyl-CoA biosynthetic process from pyruvate"/>
    <property type="evidence" value="ECO:0000318"/>
    <property type="project" value="GO_Central"/>
</dbReference>
<dbReference type="GO" id="GO:0010906">
    <property type="term" value="P:regulation of glucose metabolic process"/>
    <property type="evidence" value="ECO:0000318"/>
    <property type="project" value="GO_Central"/>
</dbReference>
<dbReference type="GO" id="GO:0007283">
    <property type="term" value="P:spermatogenesis"/>
    <property type="evidence" value="ECO:0000315"/>
    <property type="project" value="RGD"/>
</dbReference>
<dbReference type="GO" id="GO:0006574">
    <property type="term" value="P:valine catabolic process"/>
    <property type="evidence" value="ECO:0000315"/>
    <property type="project" value="RGD"/>
</dbReference>
<dbReference type="CDD" id="cd16929">
    <property type="entry name" value="HATPase_PDK-like"/>
    <property type="match status" value="1"/>
</dbReference>
<dbReference type="FunFam" id="1.20.140.20:FF:000002">
    <property type="entry name" value="[3-methyl-2-oxobutanoate dehydrogenase [lipoamide]] kinase, mitochondrial"/>
    <property type="match status" value="1"/>
</dbReference>
<dbReference type="FunFam" id="3.30.565.10:FF:000051">
    <property type="entry name" value="[3-methyl-2-oxobutanoate dehydrogenase [lipoamide]] kinase, mitochondrial"/>
    <property type="match status" value="1"/>
</dbReference>
<dbReference type="Gene3D" id="1.20.140.20">
    <property type="entry name" value="Alpha-ketoacid/pyruvate dehydrogenase kinase, N-terminal domain"/>
    <property type="match status" value="1"/>
</dbReference>
<dbReference type="Gene3D" id="3.30.565.10">
    <property type="entry name" value="Histidine kinase-like ATPase, C-terminal domain"/>
    <property type="match status" value="1"/>
</dbReference>
<dbReference type="InterPro" id="IPR036784">
    <property type="entry name" value="AK/P_DHK_N_sf"/>
</dbReference>
<dbReference type="InterPro" id="IPR018955">
    <property type="entry name" value="BCDHK/PDK_N"/>
</dbReference>
<dbReference type="InterPro" id="IPR039028">
    <property type="entry name" value="BCKD/PDK"/>
</dbReference>
<dbReference type="InterPro" id="IPR036890">
    <property type="entry name" value="HATPase_C_sf"/>
</dbReference>
<dbReference type="InterPro" id="IPR005467">
    <property type="entry name" value="His_kinase_dom"/>
</dbReference>
<dbReference type="InterPro" id="IPR004358">
    <property type="entry name" value="Sig_transdc_His_kin-like_C"/>
</dbReference>
<dbReference type="PANTHER" id="PTHR11947:SF20">
    <property type="entry name" value="[3-METHYL-2-OXOBUTANOATE DEHYDROGENASE [LIPOAMIDE]] KINASE, MITOCHONDRIAL"/>
    <property type="match status" value="1"/>
</dbReference>
<dbReference type="PANTHER" id="PTHR11947">
    <property type="entry name" value="PYRUVATE DEHYDROGENASE KINASE"/>
    <property type="match status" value="1"/>
</dbReference>
<dbReference type="Pfam" id="PF10436">
    <property type="entry name" value="BCDHK_Adom3"/>
    <property type="match status" value="1"/>
</dbReference>
<dbReference type="Pfam" id="PF02518">
    <property type="entry name" value="HATPase_c"/>
    <property type="match status" value="1"/>
</dbReference>
<dbReference type="PRINTS" id="PR00344">
    <property type="entry name" value="BCTRLSENSOR"/>
</dbReference>
<dbReference type="SMART" id="SM00387">
    <property type="entry name" value="HATPase_c"/>
    <property type="match status" value="1"/>
</dbReference>
<dbReference type="SUPFAM" id="SSF69012">
    <property type="entry name" value="alpha-ketoacid dehydrogenase kinase, N-terminal domain"/>
    <property type="match status" value="1"/>
</dbReference>
<dbReference type="SUPFAM" id="SSF55874">
    <property type="entry name" value="ATPase domain of HSP90 chaperone/DNA topoisomerase II/histidine kinase"/>
    <property type="match status" value="1"/>
</dbReference>
<dbReference type="PROSITE" id="PS50109">
    <property type="entry name" value="HIS_KIN"/>
    <property type="match status" value="1"/>
</dbReference>
<proteinExistence type="evidence at protein level"/>
<feature type="transit peptide" description="Mitochondrion" evidence="4">
    <location>
        <begin position="1"/>
        <end position="30"/>
    </location>
</feature>
<feature type="chain" id="PRO_0000023454" description="Branched-chain alpha-ketoacid dehydrogenase kinase">
    <location>
        <begin position="31"/>
        <end position="412"/>
    </location>
</feature>
<feature type="domain" description="Histidine kinase" evidence="2">
    <location>
        <begin position="159"/>
        <end position="404"/>
    </location>
</feature>
<feature type="binding site" evidence="3 12">
    <location>
        <position position="279"/>
    </location>
    <ligand>
        <name>ATP</name>
        <dbReference type="ChEBI" id="CHEBI:30616"/>
    </ligand>
</feature>
<feature type="binding site" evidence="3 12">
    <location>
        <position position="279"/>
    </location>
    <ligand>
        <name>Mg(2+)</name>
        <dbReference type="ChEBI" id="CHEBI:18420"/>
        <note>structural</note>
    </ligand>
</feature>
<feature type="binding site" evidence="3 12">
    <location>
        <position position="315"/>
    </location>
    <ligand>
        <name>ATP</name>
        <dbReference type="ChEBI" id="CHEBI:30616"/>
    </ligand>
</feature>
<feature type="binding site" evidence="3 12">
    <location>
        <position position="328"/>
    </location>
    <ligand>
        <name>K(+)</name>
        <dbReference type="ChEBI" id="CHEBI:29103"/>
        <note>structural</note>
    </ligand>
</feature>
<feature type="binding site" evidence="3 12">
    <location>
        <position position="330"/>
    </location>
    <ligand>
        <name>K(+)</name>
        <dbReference type="ChEBI" id="CHEBI:29103"/>
        <note>structural</note>
    </ligand>
</feature>
<feature type="binding site" evidence="3 12">
    <location>
        <position position="333"/>
    </location>
    <ligand>
        <name>K(+)</name>
        <dbReference type="ChEBI" id="CHEBI:29103"/>
        <note>structural</note>
    </ligand>
</feature>
<feature type="binding site" evidence="3 12">
    <location>
        <position position="334"/>
    </location>
    <ligand>
        <name>ATP</name>
        <dbReference type="ChEBI" id="CHEBI:30616"/>
    </ligand>
</feature>
<feature type="binding site" evidence="3 12">
    <location>
        <position position="335"/>
    </location>
    <ligand>
        <name>ATP</name>
        <dbReference type="ChEBI" id="CHEBI:30616"/>
    </ligand>
</feature>
<feature type="binding site" evidence="3 12">
    <location>
        <position position="364"/>
    </location>
    <ligand>
        <name>ATP</name>
        <dbReference type="ChEBI" id="CHEBI:30616"/>
    </ligand>
</feature>
<feature type="binding site" evidence="3 12">
    <location>
        <position position="367"/>
    </location>
    <ligand>
        <name>ATP</name>
        <dbReference type="ChEBI" id="CHEBI:30616"/>
    </ligand>
</feature>
<feature type="binding site" evidence="3 12">
    <location>
        <position position="367"/>
    </location>
    <ligand>
        <name>K(+)</name>
        <dbReference type="ChEBI" id="CHEBI:29103"/>
        <note>structural</note>
    </ligand>
</feature>
<feature type="binding site" evidence="3 12">
    <location>
        <position position="370"/>
    </location>
    <ligand>
        <name>ATP</name>
        <dbReference type="ChEBI" id="CHEBI:30616"/>
    </ligand>
</feature>
<feature type="modified residue" description="Phosphoserine" evidence="6 13">
    <location>
        <position position="31"/>
    </location>
</feature>
<feature type="modified residue" description="N6-acetyllysine" evidence="1">
    <location>
        <position position="192"/>
    </location>
</feature>
<feature type="modified residue" description="N6-acetyllysine" evidence="1">
    <location>
        <position position="233"/>
    </location>
</feature>
<feature type="modified residue" description="Phosphoserine" evidence="13">
    <location>
        <position position="356"/>
    </location>
</feature>
<feature type="modified residue" description="Phosphoserine" evidence="13">
    <location>
        <position position="360"/>
    </location>
</feature>
<feature type="sequence conflict" description="In Ref. 1 and 2." evidence="7" ref="1 2">
    <original>RSLPFIIGCNPTILH</original>
    <variation>VVFLSSLVATLPYCT</variation>
    <location>
        <begin position="110"/>
        <end position="124"/>
    </location>
</feature>
<feature type="sequence conflict" description="In Ref. 1 and 2." evidence="7" ref="1 2">
    <original>C</original>
    <variation>S</variation>
    <location>
        <position position="222"/>
    </location>
</feature>
<feature type="helix" evidence="17">
    <location>
        <begin position="57"/>
        <end position="62"/>
    </location>
</feature>
<feature type="strand" evidence="17">
    <location>
        <begin position="63"/>
        <end position="65"/>
    </location>
</feature>
<feature type="strand" evidence="15">
    <location>
        <begin position="69"/>
        <end position="71"/>
    </location>
</feature>
<feature type="helix" evidence="17">
    <location>
        <begin position="72"/>
        <end position="78"/>
    </location>
</feature>
<feature type="strand" evidence="16">
    <location>
        <begin position="82"/>
        <end position="84"/>
    </location>
</feature>
<feature type="helix" evidence="17">
    <location>
        <begin position="85"/>
        <end position="111"/>
    </location>
</feature>
<feature type="helix" evidence="17">
    <location>
        <begin position="114"/>
        <end position="117"/>
    </location>
</feature>
<feature type="helix" evidence="17">
    <location>
        <begin position="120"/>
        <end position="138"/>
    </location>
</feature>
<feature type="helix" evidence="17">
    <location>
        <begin position="145"/>
        <end position="161"/>
    </location>
</feature>
<feature type="turn" evidence="17">
    <location>
        <begin position="162"/>
        <end position="164"/>
    </location>
</feature>
<feature type="helix" evidence="17">
    <location>
        <begin position="165"/>
        <end position="175"/>
    </location>
</feature>
<feature type="helix" evidence="17">
    <location>
        <begin position="177"/>
        <end position="179"/>
    </location>
</feature>
<feature type="helix" evidence="17">
    <location>
        <begin position="183"/>
        <end position="209"/>
    </location>
</feature>
<feature type="strand" evidence="17">
    <location>
        <begin position="221"/>
        <end position="225"/>
    </location>
</feature>
<feature type="helix" evidence="17">
    <location>
        <begin position="227"/>
        <end position="246"/>
    </location>
</feature>
<feature type="strand" evidence="17">
    <location>
        <begin position="252"/>
        <end position="257"/>
    </location>
</feature>
<feature type="strand" evidence="17">
    <location>
        <begin position="262"/>
        <end position="264"/>
    </location>
</feature>
<feature type="helix" evidence="17">
    <location>
        <begin position="267"/>
        <end position="286"/>
    </location>
</feature>
<feature type="turn" evidence="17">
    <location>
        <begin position="287"/>
        <end position="290"/>
    </location>
</feature>
<feature type="strand" evidence="17">
    <location>
        <begin position="298"/>
        <end position="304"/>
    </location>
</feature>
<feature type="strand" evidence="17">
    <location>
        <begin position="306"/>
        <end position="315"/>
    </location>
</feature>
<feature type="turn" evidence="17">
    <location>
        <begin position="322"/>
        <end position="329"/>
    </location>
</feature>
<feature type="helix" evidence="17">
    <location>
        <begin position="369"/>
        <end position="379"/>
    </location>
</feature>
<feature type="strand" evidence="17">
    <location>
        <begin position="383"/>
        <end position="389"/>
    </location>
</feature>
<feature type="turn" evidence="17">
    <location>
        <begin position="390"/>
        <end position="392"/>
    </location>
</feature>
<feature type="strand" evidence="17">
    <location>
        <begin position="393"/>
        <end position="401"/>
    </location>
</feature>
<feature type="strand" evidence="14">
    <location>
        <begin position="403"/>
        <end position="405"/>
    </location>
</feature>
<accession>Q00972</accession>
<accession>Q64552</accession>
<comment type="function">
    <text evidence="1 4 6 9">Serine/threonine-protein kinase component of macronutrients metabolism. Forms a functional kinase and phosphatase pair with PPM1K, serving as a metabolic regulatory node that coordinates branched-chain amino acids (BCAAs) with glucose and lipid metabolism via two distinct phosphoprotein targets: mitochondrial BCKDHA subunit of the branched-chain alpha-ketoacid dehydrogenase (BCKDH) complex and cytosolic ACLY, a lipogenic enzyme of Krebs cycle (Probable) (PubMed:1377677, PubMed:7649998). Phosphorylates and inactivates mitochondrial BCKDH complex a multisubunit complex consisting of three multimeric components each involved in different steps of BCAA catabolism: E1 composed of BCKDHA and BCKDHB, E2 core composed of DBT monomers, and E3 composed of DLD monomers. Associates with the E2 component of BCKDH complex and phosphorylates BCKDHA on Ser-333, leading to conformational changes that interrupt substrate channeling between E1 and E2 and inactivates the BCKDH complex (Probable) (PubMed:1377677, PubMed:7649998). phosphorylates ACLY on Ser-455 in response to changes in cellular carbohydrate abundance such as occurs during fasting to feeding metabolic transition. Refeeding stimulates MLXIPL/ChREBP transcription factor, leading to increased BCKDK to PPM1K expression ratio, phosphorylation and activation of ACLY that ultimately results in the generation of malonyl-CoA and oxaloacetate immediate substrates of de novo lipogenesis and glucogenesis, respectively (Probable). Recognizes phosphosites having SxxE/D canonical motif (By similarity).</text>
</comment>
<comment type="catalytic activity">
    <reaction evidence="4 6 9">
        <text>L-seryl-[3-methyl-2-oxobutanoate dehydrogenase] + ATP = O-phospho-L-seryl-[3-methyl-2-oxobutanoate dehydrogenase] + ADP + H(+)</text>
        <dbReference type="Rhea" id="RHEA:17301"/>
        <dbReference type="Rhea" id="RHEA-COMP:13695"/>
        <dbReference type="Rhea" id="RHEA-COMP:13696"/>
        <dbReference type="ChEBI" id="CHEBI:15378"/>
        <dbReference type="ChEBI" id="CHEBI:29999"/>
        <dbReference type="ChEBI" id="CHEBI:30616"/>
        <dbReference type="ChEBI" id="CHEBI:83421"/>
        <dbReference type="ChEBI" id="CHEBI:456216"/>
        <dbReference type="EC" id="2.7.11.4"/>
    </reaction>
    <physiologicalReaction direction="left-to-right" evidence="6 8 9">
        <dbReference type="Rhea" id="RHEA:17302"/>
    </physiologicalReaction>
</comment>
<comment type="catalytic activity">
    <reaction evidence="9">
        <text>L-seryl-[protein] + ATP = O-phospho-L-seryl-[protein] + ADP + H(+)</text>
        <dbReference type="Rhea" id="RHEA:17989"/>
        <dbReference type="Rhea" id="RHEA-COMP:9863"/>
        <dbReference type="Rhea" id="RHEA-COMP:11604"/>
        <dbReference type="ChEBI" id="CHEBI:15378"/>
        <dbReference type="ChEBI" id="CHEBI:29999"/>
        <dbReference type="ChEBI" id="CHEBI:30616"/>
        <dbReference type="ChEBI" id="CHEBI:83421"/>
        <dbReference type="ChEBI" id="CHEBI:456216"/>
        <dbReference type="EC" id="2.7.11.1"/>
    </reaction>
    <physiologicalReaction direction="left-to-right" evidence="9">
        <dbReference type="Rhea" id="RHEA:17990"/>
    </physiologicalReaction>
</comment>
<comment type="activity regulation">
    <text evidence="3">The ATP-ase activity is up-regulated by potassium and rubidium ions but not by sodium ions. Up-regulated in the presence of apo- or lipoylated-DBT/E2b subunit of the BCKDH complex.</text>
</comment>
<comment type="subunit">
    <text evidence="1 3">Homodimer. Homotetramer (PubMed:11562470). Dimerizes through interaction of two opposing nucleotide-binding domains. Interacts with E2 component of the branched-chain alpha-ketoacid dehydrogenase (BCKDH) complex. Competes with BCKDK for binding to the E2 component; this interaction is modulated by branched-chain alpha-keto acids. At steady state, BCKDH holoenzyme contains BCKDK and BCKDHA is phosphorylated. In response to high levels of branched-chain alpha-keto acids, the inhibitory BCKDK is replaced by activating PPM1K leading to BCKDHA dephosphorylation and BCAA degradation (By similarity).</text>
</comment>
<comment type="subcellular location">
    <subcellularLocation>
        <location>Mitochondrion matrix</location>
    </subcellularLocation>
    <subcellularLocation>
        <location evidence="5">Mitochondrion</location>
    </subcellularLocation>
    <text evidence="5">Detected in the cytosolic compartment of liver cells.</text>
</comment>
<comment type="tissue specificity">
    <text evidence="4">Expressed in heart and liver.</text>
</comment>
<comment type="PTM">
    <text evidence="6">Autophosphorylated.</text>
</comment>
<comment type="similarity">
    <text evidence="7">Belongs to the PDK/BCKDK protein kinase family.</text>
</comment>
<reference key="1">
    <citation type="journal article" date="1992" name="J. Biol. Chem.">
        <title>Branched-chain alpha-ketoacid dehydrogenase kinase. Molecular cloning, expression, and sequence similarity with histidine protein kinases.</title>
        <authorList>
            <person name="Popov K.M."/>
            <person name="Zhao Y."/>
            <person name="Shimomura Y."/>
            <person name="Kuntz M.J."/>
            <person name="Harris R.A."/>
        </authorList>
    </citation>
    <scope>NUCLEOTIDE SEQUENCE [MRNA]</scope>
    <scope>PROTEIN SEQUENCE OF 31-67; 93-100; 254-260 AND 328-343</scope>
    <scope>TISSUE SPECIFICITY</scope>
    <scope>CATALYTIC ACTIVITY</scope>
    <source>
        <tissue>Heart</tissue>
    </source>
</reference>
<reference key="2">
    <citation type="journal article" date="1992" name="Adv. Enzyme Regul.">
        <title>Purification, characterization, regulation and molecular cloning of mitochondrial protein kinases.</title>
        <authorList>
            <person name="Harris R.A."/>
            <person name="Popov K.M."/>
            <person name="Shimomura Y."/>
            <person name="Zhao Y."/>
            <person name="Jaskiewicz J."/>
            <person name="Nanaumi N."/>
            <person name="Suzuki M."/>
        </authorList>
    </citation>
    <scope>NUCLEOTIDE SEQUENCE [MRNA]</scope>
    <source>
        <tissue>Heart</tissue>
    </source>
</reference>
<reference key="3">
    <citation type="journal article" date="1995" name="J. Biol. Chem.">
        <title>Expression and characterization of branched-chain alpha-ketoacid dehydrogenase kinase from the rat. Is it a histidine-protein kinase?</title>
        <authorList>
            <person name="Davie J.R."/>
            <person name="Wynn R.M."/>
            <person name="Meng M."/>
            <person name="Huang Y.-S."/>
            <person name="Aalund G."/>
            <person name="Chuang D.T."/>
            <person name="Lau K.S."/>
        </authorList>
    </citation>
    <scope>NUCLEOTIDE SEQUENCE [MRNA] OF 31-412</scope>
    <scope>SEQUENCE REVISION TO 110-124 AND 222</scope>
    <scope>PHOSPHORYLATION AT SER-31</scope>
    <scope>CATALYTIC ACTIVITY</scope>
    <source>
        <tissue>Kidney</tissue>
    </source>
</reference>
<reference key="4">
    <citation type="journal article" date="2012" name="Nat. Commun.">
        <title>Quantitative maps of protein phosphorylation sites across 14 different rat organs and tissues.</title>
        <authorList>
            <person name="Lundby A."/>
            <person name="Secher A."/>
            <person name="Lage K."/>
            <person name="Nordsborg N.B."/>
            <person name="Dmytriyev A."/>
            <person name="Lundby C."/>
            <person name="Olsen J.V."/>
        </authorList>
    </citation>
    <scope>PHOSPHORYLATION [LARGE SCALE ANALYSIS] AT SER-31; SER-356 AND SER-360</scope>
    <scope>IDENTIFICATION BY MASS SPECTROMETRY [LARGE SCALE ANALYSIS]</scope>
</reference>
<reference key="5">
    <citation type="journal article" date="2018" name="Cell Metab.">
        <title>The BCKDH Kinase and Phosphatase Integrate BCAA and Lipid Metabolism via Regulation of ATP-Citrate Lyase.</title>
        <authorList>
            <person name="White P.J."/>
            <person name="McGarrah R.W."/>
            <person name="Grimsrud P.A."/>
            <person name="Tso S.C."/>
            <person name="Yang W.H."/>
            <person name="Haldeman J.M."/>
            <person name="Grenier-Larouche T."/>
            <person name="An J."/>
            <person name="Lapworth A.L."/>
            <person name="Astapova I."/>
            <person name="Hannou S.A."/>
            <person name="George T."/>
            <person name="Arlotto M."/>
            <person name="Olson L.B."/>
            <person name="Lai M."/>
            <person name="Zhang G.F."/>
            <person name="Ilkayeva O."/>
            <person name="Herman M.A."/>
            <person name="Wynn R.M."/>
            <person name="Chuang D.T."/>
            <person name="Newgard C.B."/>
        </authorList>
    </citation>
    <scope>FUNCTION</scope>
    <scope>CATALYTIC ACTIVITY</scope>
    <scope>SUBCELLULAR LOCATION</scope>
</reference>
<reference evidence="10 11 12" key="6">
    <citation type="journal article" date="2001" name="Proc. Natl. Acad. Sci. U.S.A.">
        <title>Structure of rat BCKD kinase: nucleotide-induced domain communication in a mitochondrial protein kinase.</title>
        <authorList>
            <person name="Machius M."/>
            <person name="Chuang J.L."/>
            <person name="Wynn R.M."/>
            <person name="Tomchick D.R."/>
            <person name="Chuang D.T."/>
        </authorList>
    </citation>
    <scope>X-RAY CRYSTALLOGRAPHY (2.20 ANGSTROMS) OF 31-412 IN COMPLEX WITH ATP; MG(2+) AND K(+)</scope>
    <scope>SUBUNIT</scope>
    <scope>ACTIVITY REGULATION</scope>
</reference>
<sequence length="412" mass="46474">MILTSVLGSGPRSGSSLWPLLGSSLSLRVRSTSATDTHHVELARERSKTVTSFYNQSAIDVVAEKPSVRLTPTMMLYSGRSQDGSHLLKSGRYLQQELPVRIAHRIKGFRSLPFIIGCNPTILHVHELYIRAFQKLTDFPPIKDQADEAQYCQLVRQLLDDHKDVVTLLAEGLRESRKHIEDEKLVRYFLDKTLTSRLGIRMLATHHLALHEDKPDFVGIICTRLSPKKIIEKWVDFARRLCEHKYGNAPRVRINGHVAARFPFIPMPLDYILPELLKNAMRATMESHLDTPYNVPDVVITIANNDVDLIIRISDRGGGIAHKDLDRVMDYHFTTAEASTQDPRISPLFGHLDMHSGGQSGPMHGFGFGLPTSRAYAEYLGGSLQLQSLQGIGTDVYLRLRHIDGREESFRI</sequence>
<gene>
    <name type="primary">Bckdk</name>
</gene>
<protein>
    <recommendedName>
        <fullName evidence="1">Branched-chain alpha-ketoacid dehydrogenase kinase</fullName>
        <shortName evidence="1">BCKDH kinase</shortName>
        <shortName>BCKDHKIN</shortName>
        <shortName evidence="1">BDK</shortName>
        <ecNumber evidence="9">2.7.11.1</ecNumber>
    </recommendedName>
    <alternativeName>
        <fullName>[3-methyl-2-oxobutanoate dehydrogenase [lipoamide]] kinase, mitochondrial</fullName>
        <ecNumber evidence="4 6">2.7.11.4</ecNumber>
    </alternativeName>
</protein>
<name>BCKD_RAT</name>
<organism>
    <name type="scientific">Rattus norvegicus</name>
    <name type="common">Rat</name>
    <dbReference type="NCBI Taxonomy" id="10116"/>
    <lineage>
        <taxon>Eukaryota</taxon>
        <taxon>Metazoa</taxon>
        <taxon>Chordata</taxon>
        <taxon>Craniata</taxon>
        <taxon>Vertebrata</taxon>
        <taxon>Euteleostomi</taxon>
        <taxon>Mammalia</taxon>
        <taxon>Eutheria</taxon>
        <taxon>Euarchontoglires</taxon>
        <taxon>Glires</taxon>
        <taxon>Rodentia</taxon>
        <taxon>Myomorpha</taxon>
        <taxon>Muroidea</taxon>
        <taxon>Muridae</taxon>
        <taxon>Murinae</taxon>
        <taxon>Rattus</taxon>
    </lineage>
</organism>
<evidence type="ECO:0000250" key="1">
    <source>
        <dbReference type="UniProtKB" id="O14874"/>
    </source>
</evidence>
<evidence type="ECO:0000255" key="2">
    <source>
        <dbReference type="PROSITE-ProRule" id="PRU00107"/>
    </source>
</evidence>
<evidence type="ECO:0000269" key="3">
    <source>
    </source>
</evidence>
<evidence type="ECO:0000269" key="4">
    <source>
    </source>
</evidence>
<evidence type="ECO:0000269" key="5">
    <source>
    </source>
</evidence>
<evidence type="ECO:0000269" key="6">
    <source>
    </source>
</evidence>
<evidence type="ECO:0000305" key="7"/>
<evidence type="ECO:0000305" key="8">
    <source>
    </source>
</evidence>
<evidence type="ECO:0000305" key="9">
    <source>
    </source>
</evidence>
<evidence type="ECO:0007744" key="10">
    <source>
        <dbReference type="PDB" id="1GJV"/>
    </source>
</evidence>
<evidence type="ECO:0007744" key="11">
    <source>
        <dbReference type="PDB" id="1GKX"/>
    </source>
</evidence>
<evidence type="ECO:0007744" key="12">
    <source>
        <dbReference type="PDB" id="1GKZ"/>
    </source>
</evidence>
<evidence type="ECO:0007744" key="13">
    <source>
    </source>
</evidence>
<evidence type="ECO:0007829" key="14">
    <source>
        <dbReference type="PDB" id="1GKZ"/>
    </source>
</evidence>
<evidence type="ECO:0007829" key="15">
    <source>
        <dbReference type="PDB" id="3TZ4"/>
    </source>
</evidence>
<evidence type="ECO:0007829" key="16">
    <source>
        <dbReference type="PDB" id="4E01"/>
    </source>
</evidence>
<evidence type="ECO:0007829" key="17">
    <source>
        <dbReference type="PDB" id="8EGF"/>
    </source>
</evidence>